<gene>
    <name evidence="1" type="primary">atpC</name>
    <name type="ordered locus">HCH_07070</name>
</gene>
<dbReference type="EMBL" id="CP000155">
    <property type="protein sequence ID" value="ABC33682.1"/>
    <property type="molecule type" value="Genomic_DNA"/>
</dbReference>
<dbReference type="RefSeq" id="WP_011400732.1">
    <property type="nucleotide sequence ID" value="NC_007645.1"/>
</dbReference>
<dbReference type="SMR" id="Q2S6P2"/>
<dbReference type="STRING" id="349521.HCH_07070"/>
<dbReference type="KEGG" id="hch:HCH_07070"/>
<dbReference type="eggNOG" id="COG0355">
    <property type="taxonomic scope" value="Bacteria"/>
</dbReference>
<dbReference type="HOGENOM" id="CLU_084338_2_0_6"/>
<dbReference type="OrthoDB" id="9791445at2"/>
<dbReference type="Proteomes" id="UP000000238">
    <property type="component" value="Chromosome"/>
</dbReference>
<dbReference type="GO" id="GO:0005886">
    <property type="term" value="C:plasma membrane"/>
    <property type="evidence" value="ECO:0007669"/>
    <property type="project" value="UniProtKB-SubCell"/>
</dbReference>
<dbReference type="GO" id="GO:0045259">
    <property type="term" value="C:proton-transporting ATP synthase complex"/>
    <property type="evidence" value="ECO:0007669"/>
    <property type="project" value="UniProtKB-KW"/>
</dbReference>
<dbReference type="GO" id="GO:0005524">
    <property type="term" value="F:ATP binding"/>
    <property type="evidence" value="ECO:0007669"/>
    <property type="project" value="UniProtKB-UniRule"/>
</dbReference>
<dbReference type="GO" id="GO:0046933">
    <property type="term" value="F:proton-transporting ATP synthase activity, rotational mechanism"/>
    <property type="evidence" value="ECO:0007669"/>
    <property type="project" value="UniProtKB-UniRule"/>
</dbReference>
<dbReference type="CDD" id="cd12152">
    <property type="entry name" value="F1-ATPase_delta"/>
    <property type="match status" value="1"/>
</dbReference>
<dbReference type="FunFam" id="2.60.15.10:FF:000001">
    <property type="entry name" value="ATP synthase epsilon chain"/>
    <property type="match status" value="1"/>
</dbReference>
<dbReference type="Gene3D" id="1.20.5.440">
    <property type="entry name" value="ATP synthase delta/epsilon subunit, C-terminal domain"/>
    <property type="match status" value="1"/>
</dbReference>
<dbReference type="Gene3D" id="2.60.15.10">
    <property type="entry name" value="F0F1 ATP synthase delta/epsilon subunit, N-terminal"/>
    <property type="match status" value="1"/>
</dbReference>
<dbReference type="HAMAP" id="MF_00530">
    <property type="entry name" value="ATP_synth_epsil_bac"/>
    <property type="match status" value="1"/>
</dbReference>
<dbReference type="InterPro" id="IPR036794">
    <property type="entry name" value="ATP_F1_dsu/esu_C_sf"/>
</dbReference>
<dbReference type="InterPro" id="IPR001469">
    <property type="entry name" value="ATP_synth_F1_dsu/esu"/>
</dbReference>
<dbReference type="InterPro" id="IPR020546">
    <property type="entry name" value="ATP_synth_F1_dsu/esu_N"/>
</dbReference>
<dbReference type="InterPro" id="IPR020547">
    <property type="entry name" value="ATP_synth_F1_esu_C"/>
</dbReference>
<dbReference type="InterPro" id="IPR036771">
    <property type="entry name" value="ATPsynth_dsu/esu_N"/>
</dbReference>
<dbReference type="NCBIfam" id="TIGR01216">
    <property type="entry name" value="ATP_synt_epsi"/>
    <property type="match status" value="1"/>
</dbReference>
<dbReference type="NCBIfam" id="NF001847">
    <property type="entry name" value="PRK00571.1-4"/>
    <property type="match status" value="1"/>
</dbReference>
<dbReference type="NCBIfam" id="NF009977">
    <property type="entry name" value="PRK13442.1"/>
    <property type="match status" value="1"/>
</dbReference>
<dbReference type="PANTHER" id="PTHR13822">
    <property type="entry name" value="ATP SYNTHASE DELTA/EPSILON CHAIN"/>
    <property type="match status" value="1"/>
</dbReference>
<dbReference type="PANTHER" id="PTHR13822:SF10">
    <property type="entry name" value="ATP SYNTHASE EPSILON CHAIN, CHLOROPLASTIC"/>
    <property type="match status" value="1"/>
</dbReference>
<dbReference type="Pfam" id="PF00401">
    <property type="entry name" value="ATP-synt_DE"/>
    <property type="match status" value="1"/>
</dbReference>
<dbReference type="Pfam" id="PF02823">
    <property type="entry name" value="ATP-synt_DE_N"/>
    <property type="match status" value="1"/>
</dbReference>
<dbReference type="SUPFAM" id="SSF46604">
    <property type="entry name" value="Epsilon subunit of F1F0-ATP synthase C-terminal domain"/>
    <property type="match status" value="1"/>
</dbReference>
<dbReference type="SUPFAM" id="SSF51344">
    <property type="entry name" value="Epsilon subunit of F1F0-ATP synthase N-terminal domain"/>
    <property type="match status" value="1"/>
</dbReference>
<evidence type="ECO:0000255" key="1">
    <source>
        <dbReference type="HAMAP-Rule" id="MF_00530"/>
    </source>
</evidence>
<keyword id="KW-0066">ATP synthesis</keyword>
<keyword id="KW-0997">Cell inner membrane</keyword>
<keyword id="KW-1003">Cell membrane</keyword>
<keyword id="KW-0139">CF(1)</keyword>
<keyword id="KW-0375">Hydrogen ion transport</keyword>
<keyword id="KW-0406">Ion transport</keyword>
<keyword id="KW-0472">Membrane</keyword>
<keyword id="KW-1185">Reference proteome</keyword>
<keyword id="KW-0813">Transport</keyword>
<sequence>MGISVHCDIVSAEQEIFSGLVEMVIAAGSEGDLGITPGHTPLLTALNPGPVRIIKQGGEEEVFFVTGGFLEVQPNMVTILSDSAQRAGDMDEAAALEAKKEAEKALANRGGDFEYSRAASQLAEAAARLRTIQQMRNKLKR</sequence>
<comment type="function">
    <text evidence="1">Produces ATP from ADP in the presence of a proton gradient across the membrane.</text>
</comment>
<comment type="subunit">
    <text>F-type ATPases have 2 components, CF(1) - the catalytic core - and CF(0) - the membrane proton channel. CF(1) has five subunits: alpha(3), beta(3), gamma(1), delta(1), epsilon(1). CF(0) has three main subunits: a, b and c.</text>
</comment>
<comment type="subcellular location">
    <subcellularLocation>
        <location evidence="1">Cell inner membrane</location>
        <topology evidence="1">Peripheral membrane protein</topology>
    </subcellularLocation>
</comment>
<comment type="similarity">
    <text evidence="1">Belongs to the ATPase epsilon chain family.</text>
</comment>
<name>ATPE_HAHCH</name>
<feature type="chain" id="PRO_0000265822" description="ATP synthase epsilon chain">
    <location>
        <begin position="1"/>
        <end position="141"/>
    </location>
</feature>
<reference key="1">
    <citation type="journal article" date="2005" name="Nucleic Acids Res.">
        <title>Genomic blueprint of Hahella chejuensis, a marine microbe producing an algicidal agent.</title>
        <authorList>
            <person name="Jeong H."/>
            <person name="Yim J.H."/>
            <person name="Lee C."/>
            <person name="Choi S.-H."/>
            <person name="Park Y.K."/>
            <person name="Yoon S.H."/>
            <person name="Hur C.-G."/>
            <person name="Kang H.-Y."/>
            <person name="Kim D."/>
            <person name="Lee H.H."/>
            <person name="Park K.H."/>
            <person name="Park S.-H."/>
            <person name="Park H.-S."/>
            <person name="Lee H.K."/>
            <person name="Oh T.K."/>
            <person name="Kim J.F."/>
        </authorList>
    </citation>
    <scope>NUCLEOTIDE SEQUENCE [LARGE SCALE GENOMIC DNA]</scope>
    <source>
        <strain>KCTC 2396</strain>
    </source>
</reference>
<proteinExistence type="inferred from homology"/>
<accession>Q2S6P2</accession>
<protein>
    <recommendedName>
        <fullName evidence="1">ATP synthase epsilon chain</fullName>
    </recommendedName>
    <alternativeName>
        <fullName evidence="1">ATP synthase F1 sector epsilon subunit</fullName>
    </alternativeName>
    <alternativeName>
        <fullName evidence="1">F-ATPase epsilon subunit</fullName>
    </alternativeName>
</protein>
<organism>
    <name type="scientific">Hahella chejuensis (strain KCTC 2396)</name>
    <dbReference type="NCBI Taxonomy" id="349521"/>
    <lineage>
        <taxon>Bacteria</taxon>
        <taxon>Pseudomonadati</taxon>
        <taxon>Pseudomonadota</taxon>
        <taxon>Gammaproteobacteria</taxon>
        <taxon>Oceanospirillales</taxon>
        <taxon>Hahellaceae</taxon>
        <taxon>Hahella</taxon>
    </lineage>
</organism>